<accession>P9WFN4</accession>
<accession>L0T822</accession>
<accession>O07723</accession>
<accession>P67222</accession>
<protein>
    <recommendedName>
        <fullName>UPF0098 protein MT1961</fullName>
    </recommendedName>
</protein>
<organism>
    <name type="scientific">Mycobacterium tuberculosis (strain CDC 1551 / Oshkosh)</name>
    <dbReference type="NCBI Taxonomy" id="83331"/>
    <lineage>
        <taxon>Bacteria</taxon>
        <taxon>Bacillati</taxon>
        <taxon>Actinomycetota</taxon>
        <taxon>Actinomycetes</taxon>
        <taxon>Mycobacteriales</taxon>
        <taxon>Mycobacteriaceae</taxon>
        <taxon>Mycobacterium</taxon>
        <taxon>Mycobacterium tuberculosis complex</taxon>
    </lineage>
</organism>
<sequence>MESTVAHAFHRFALAILGLALPVALVAYGGNGDSRKAAPLAPKAAALGRSMPETPTGDVLTISSPAFADGAPIPEQYTCKGANIAPPLTWSAPFGGALVVDDPDAPREPYVHWIVIGIAPGAGSTADGETPGGGISLPNSSGQPAYTGPCPPAGTGTHHYRFTLYHLPAVPPLAGLAGTQAARVIAQAATMQARLIGTYEG</sequence>
<comment type="similarity">
    <text evidence="2">Belongs to the UPF0098 family.</text>
</comment>
<comment type="sequence caution" evidence="2">
    <conflict type="erroneous initiation">
        <sequence resource="EMBL-CDS" id="AAK46233"/>
    </conflict>
    <text>Extended N-terminus.</text>
</comment>
<keyword id="KW-1185">Reference proteome</keyword>
<dbReference type="EMBL" id="AE000516">
    <property type="protein sequence ID" value="AAK46233.1"/>
    <property type="status" value="ALT_INIT"/>
    <property type="molecule type" value="Genomic_DNA"/>
</dbReference>
<dbReference type="PIR" id="C70519">
    <property type="entry name" value="C70519"/>
</dbReference>
<dbReference type="SMR" id="P9WFN4"/>
<dbReference type="KEGG" id="mtc:MT1961"/>
<dbReference type="HOGENOM" id="CLU_083918_3_2_11"/>
<dbReference type="Proteomes" id="UP000001020">
    <property type="component" value="Chromosome"/>
</dbReference>
<dbReference type="CDD" id="cd00865">
    <property type="entry name" value="PEBP_bact_arch"/>
    <property type="match status" value="1"/>
</dbReference>
<dbReference type="FunFam" id="3.90.280.10:FF:000008">
    <property type="entry name" value="Probable lipoprotein lppC"/>
    <property type="match status" value="1"/>
</dbReference>
<dbReference type="Gene3D" id="3.90.280.10">
    <property type="entry name" value="PEBP-like"/>
    <property type="match status" value="1"/>
</dbReference>
<dbReference type="InterPro" id="IPR008914">
    <property type="entry name" value="PEBP"/>
</dbReference>
<dbReference type="InterPro" id="IPR036610">
    <property type="entry name" value="PEBP-like_sf"/>
</dbReference>
<dbReference type="InterPro" id="IPR005247">
    <property type="entry name" value="YbhB_YbcL/LppC-like"/>
</dbReference>
<dbReference type="PANTHER" id="PTHR30289:SF1">
    <property type="entry name" value="PEBP (PHOSPHATIDYLETHANOLAMINE-BINDING PROTEIN) FAMILY PROTEIN"/>
    <property type="match status" value="1"/>
</dbReference>
<dbReference type="PANTHER" id="PTHR30289">
    <property type="entry name" value="UNCHARACTERIZED PROTEIN YBCL-RELATED"/>
    <property type="match status" value="1"/>
</dbReference>
<dbReference type="Pfam" id="PF01161">
    <property type="entry name" value="PBP"/>
    <property type="match status" value="1"/>
</dbReference>
<dbReference type="SUPFAM" id="SSF49777">
    <property type="entry name" value="PEBP-like"/>
    <property type="match status" value="1"/>
</dbReference>
<evidence type="ECO:0000256" key="1">
    <source>
        <dbReference type="SAM" id="MobiDB-lite"/>
    </source>
</evidence>
<evidence type="ECO:0000305" key="2"/>
<reference key="1">
    <citation type="journal article" date="2002" name="J. Bacteriol.">
        <title>Whole-genome comparison of Mycobacterium tuberculosis clinical and laboratory strains.</title>
        <authorList>
            <person name="Fleischmann R.D."/>
            <person name="Alland D."/>
            <person name="Eisen J.A."/>
            <person name="Carpenter L."/>
            <person name="White O."/>
            <person name="Peterson J.D."/>
            <person name="DeBoy R.T."/>
            <person name="Dodson R.J."/>
            <person name="Gwinn M.L."/>
            <person name="Haft D.H."/>
            <person name="Hickey E.K."/>
            <person name="Kolonay J.F."/>
            <person name="Nelson W.C."/>
            <person name="Umayam L.A."/>
            <person name="Ermolaeva M.D."/>
            <person name="Salzberg S.L."/>
            <person name="Delcher A."/>
            <person name="Utterback T.R."/>
            <person name="Weidman J.F."/>
            <person name="Khouri H.M."/>
            <person name="Gill J."/>
            <person name="Mikula A."/>
            <person name="Bishai W."/>
            <person name="Jacobs W.R. Jr."/>
            <person name="Venter J.C."/>
            <person name="Fraser C.M."/>
        </authorList>
    </citation>
    <scope>NUCLEOTIDE SEQUENCE [LARGE SCALE GENOMIC DNA]</scope>
    <source>
        <strain>CDC 1551 / Oshkosh</strain>
    </source>
</reference>
<gene>
    <name type="ordered locus">MT1961</name>
</gene>
<proteinExistence type="inferred from homology"/>
<name>Y1910_MYCTO</name>
<feature type="chain" id="PRO_0000428508" description="UPF0098 protein MT1961">
    <location>
        <begin position="1"/>
        <end position="201"/>
    </location>
</feature>
<feature type="region of interest" description="Disordered" evidence="1">
    <location>
        <begin position="125"/>
        <end position="146"/>
    </location>
</feature>